<accession>P15125</accession>
<proteinExistence type="evidence at transcript level"/>
<gene>
    <name type="primary">rpl5-a</name>
</gene>
<name>RL5A_XENLA</name>
<dbReference type="EMBL" id="M29032">
    <property type="protein sequence ID" value="AAA49952.1"/>
    <property type="molecule type" value="mRNA"/>
</dbReference>
<dbReference type="PIR" id="A33823">
    <property type="entry name" value="A33823"/>
</dbReference>
<dbReference type="SMR" id="P15125"/>
<dbReference type="AGR" id="Xenbase:XB-GENE-6251827"/>
<dbReference type="Xenbase" id="XB-GENE-6251827">
    <property type="gene designation" value="rpl5.S"/>
</dbReference>
<dbReference type="Proteomes" id="UP000186698">
    <property type="component" value="Unplaced"/>
</dbReference>
<dbReference type="GO" id="GO:0022625">
    <property type="term" value="C:cytosolic large ribosomal subunit"/>
    <property type="evidence" value="ECO:0007669"/>
    <property type="project" value="TreeGrafter"/>
</dbReference>
<dbReference type="GO" id="GO:0005730">
    <property type="term" value="C:nucleolus"/>
    <property type="evidence" value="ECO:0007669"/>
    <property type="project" value="UniProtKB-SubCell"/>
</dbReference>
<dbReference type="GO" id="GO:0008097">
    <property type="term" value="F:5S rRNA binding"/>
    <property type="evidence" value="ECO:0007669"/>
    <property type="project" value="InterPro"/>
</dbReference>
<dbReference type="GO" id="GO:0003735">
    <property type="term" value="F:structural constituent of ribosome"/>
    <property type="evidence" value="ECO:0007669"/>
    <property type="project" value="InterPro"/>
</dbReference>
<dbReference type="GO" id="GO:0000027">
    <property type="term" value="P:ribosomal large subunit assembly"/>
    <property type="evidence" value="ECO:0007669"/>
    <property type="project" value="TreeGrafter"/>
</dbReference>
<dbReference type="GO" id="GO:0006412">
    <property type="term" value="P:translation"/>
    <property type="evidence" value="ECO:0007669"/>
    <property type="project" value="InterPro"/>
</dbReference>
<dbReference type="CDD" id="cd00432">
    <property type="entry name" value="Ribosomal_L18_L5e"/>
    <property type="match status" value="1"/>
</dbReference>
<dbReference type="FunFam" id="3.30.420.100:FF:000011">
    <property type="entry name" value="60S ribosomal protein L5"/>
    <property type="match status" value="1"/>
</dbReference>
<dbReference type="FunFam" id="3.30.420.100:FF:000013">
    <property type="entry name" value="60S ribosomal protein L5 isoform X2"/>
    <property type="match status" value="1"/>
</dbReference>
<dbReference type="Gene3D" id="3.30.420.100">
    <property type="match status" value="1"/>
</dbReference>
<dbReference type="HAMAP" id="MF_01337_A">
    <property type="entry name" value="Ribosomal_uL18_A"/>
    <property type="match status" value="1"/>
</dbReference>
<dbReference type="InterPro" id="IPR005485">
    <property type="entry name" value="Rbsml_uL18_euk"/>
</dbReference>
<dbReference type="InterPro" id="IPR025607">
    <property type="entry name" value="Ribosomal_uL18_C_euk"/>
</dbReference>
<dbReference type="PANTHER" id="PTHR23410:SF12">
    <property type="entry name" value="LARGE RIBOSOMAL SUBUNIT PROTEIN UL18"/>
    <property type="match status" value="1"/>
</dbReference>
<dbReference type="PANTHER" id="PTHR23410">
    <property type="entry name" value="RIBOSOMAL PROTEIN L5-RELATED"/>
    <property type="match status" value="1"/>
</dbReference>
<dbReference type="Pfam" id="PF14204">
    <property type="entry name" value="Ribosomal_L18_c"/>
    <property type="match status" value="1"/>
</dbReference>
<dbReference type="Pfam" id="PF17144">
    <property type="entry name" value="Ribosomal_L5e"/>
    <property type="match status" value="1"/>
</dbReference>
<dbReference type="PRINTS" id="PR00058">
    <property type="entry name" value="RIBOSOMALL5"/>
</dbReference>
<dbReference type="SUPFAM" id="SSF53137">
    <property type="entry name" value="Translational machinery components"/>
    <property type="match status" value="1"/>
</dbReference>
<comment type="function">
    <text evidence="1">Component of the ribosome, a large ribonucleoprotein complex responsible for the synthesis of proteins in the cell. The small ribosomal subunit (SSU) binds messenger RNAs (mRNAs) and translates the encoded message by selecting cognate aminoacyl-transfer RNA (tRNA) molecules. The large subunit (LSU) contains the ribosomal catalytic site termed the peptidyl transferase center (PTC), which catalyzes the formation of peptide bonds, thereby polymerizing the amino acids delivered by tRNAs into a polypeptide chain. The nascent polypeptides leave the ribosome through a tunnel in the LSU and interact with protein factors that function in enzymatic processing, targeting, and the membrane insertion of nascent chains at the exit of the ribosomal tunnel. As part of the 5S RNP/5S ribonucleoprotein particle it is an essential component of the LSU, required for its formation and the maturation of rRNAs. It also couples ribosome biogenesis to p53/TP53 activation. As part of the 5S RNP it accumulates in the nucleoplasm and inhibits MDM2, when ribosome biogenesis is perturbed, mediating the stabilization and the activation of TP53.</text>
</comment>
<comment type="subunit">
    <text evidence="1">Component of the large ribosomal subunit (LSU). Part of a LSU subcomplex, the 5S RNP which is composed of the 5S RNA, RPL5 and RPL11.</text>
</comment>
<comment type="subcellular location">
    <subcellularLocation>
        <location evidence="1">Cytoplasm</location>
    </subcellularLocation>
    <subcellularLocation>
        <location evidence="1">Nucleus</location>
        <location evidence="1">Nucleolus</location>
    </subcellularLocation>
</comment>
<comment type="similarity">
    <text evidence="3">Belongs to the universal ribosomal protein uL18 family.</text>
</comment>
<evidence type="ECO:0000250" key="1">
    <source>
        <dbReference type="UniProtKB" id="P46777"/>
    </source>
</evidence>
<evidence type="ECO:0000256" key="2">
    <source>
        <dbReference type="SAM" id="MobiDB-lite"/>
    </source>
</evidence>
<evidence type="ECO:0000305" key="3"/>
<sequence length="296" mass="34105">MGFVKVVKNKAYFKRYQVKFRRRREGKTDYYARKRLVIQDKNKYNTPKYRMIVRVTNRDIICQIAYARIEGDMIVCAAYAHELPKYGIKVGLTNYAAAYCTGLLLARRLLNKFGLDKVYEGQVEVTGDEYNVESIDGEPGAFTCYLDAGLTRTTTGNKVFGALKGAVDGGLSIPHSTKRFPGYDSESKEFNPEVHRKHIFAQNVAEYMRLLMEEDEDAYKKQFSQYIKNGVTADQVEDLYKKAHAGIRENPVHEKKPKKEVKKKRWNRAKLSLEQKKDRVAQKKASFLRAQEKADS</sequence>
<organism>
    <name type="scientific">Xenopus laevis</name>
    <name type="common">African clawed frog</name>
    <dbReference type="NCBI Taxonomy" id="8355"/>
    <lineage>
        <taxon>Eukaryota</taxon>
        <taxon>Metazoa</taxon>
        <taxon>Chordata</taxon>
        <taxon>Craniata</taxon>
        <taxon>Vertebrata</taxon>
        <taxon>Euteleostomi</taxon>
        <taxon>Amphibia</taxon>
        <taxon>Batrachia</taxon>
        <taxon>Anura</taxon>
        <taxon>Pipoidea</taxon>
        <taxon>Pipidae</taxon>
        <taxon>Xenopodinae</taxon>
        <taxon>Xenopus</taxon>
        <taxon>Xenopus</taxon>
    </lineage>
</organism>
<protein>
    <recommendedName>
        <fullName evidence="3">Large ribosomal subunit protein uL18A</fullName>
    </recommendedName>
    <alternativeName>
        <fullName>60S ribosomal protein L5-A</fullName>
    </alternativeName>
</protein>
<reference key="1">
    <citation type="journal article" date="1989" name="Mol. Cell. Biol.">
        <title>Developmental expression and 5S rRNA-binding activity of Xenopus laevis ribosomal protein L5.</title>
        <authorList>
            <person name="Wormington W.M."/>
        </authorList>
    </citation>
    <scope>NUCLEOTIDE SEQUENCE [MRNA]</scope>
</reference>
<feature type="initiator methionine" description="Removed" evidence="1">
    <location>
        <position position="1"/>
    </location>
</feature>
<feature type="chain" id="PRO_0000131438" description="Large ribosomal subunit protein uL18A">
    <location>
        <begin position="2"/>
        <end position="296"/>
    </location>
</feature>
<feature type="region of interest" description="Disordered" evidence="2">
    <location>
        <begin position="251"/>
        <end position="296"/>
    </location>
</feature>
<feature type="compositionally biased region" description="Basic residues" evidence="2">
    <location>
        <begin position="255"/>
        <end position="268"/>
    </location>
</feature>
<feature type="compositionally biased region" description="Basic and acidic residues" evidence="2">
    <location>
        <begin position="271"/>
        <end position="281"/>
    </location>
</feature>
<keyword id="KW-0963">Cytoplasm</keyword>
<keyword id="KW-0539">Nucleus</keyword>
<keyword id="KW-1185">Reference proteome</keyword>
<keyword id="KW-0687">Ribonucleoprotein</keyword>
<keyword id="KW-0689">Ribosomal protein</keyword>
<keyword id="KW-0694">RNA-binding</keyword>
<keyword id="KW-0699">rRNA-binding</keyword>